<organism>
    <name type="scientific">Conus purpurascens</name>
    <name type="common">Purple cone</name>
    <dbReference type="NCBI Taxonomy" id="41690"/>
    <lineage>
        <taxon>Eukaryota</taxon>
        <taxon>Metazoa</taxon>
        <taxon>Spiralia</taxon>
        <taxon>Lophotrochozoa</taxon>
        <taxon>Mollusca</taxon>
        <taxon>Gastropoda</taxon>
        <taxon>Caenogastropoda</taxon>
        <taxon>Neogastropoda</taxon>
        <taxon>Conoidea</taxon>
        <taxon>Conidae</taxon>
        <taxon>Conus</taxon>
        <taxon>Chelyconus</taxon>
    </lineage>
</organism>
<accession>P86500</accession>
<protein>
    <recommendedName>
        <fullName evidence="2">Conotoxin p21a</fullName>
    </recommendedName>
</protein>
<feature type="chain" id="PRO_0000394442" description="Conotoxin p21a" evidence="1">
    <location>
        <begin position="1"/>
        <end position="83"/>
    </location>
</feature>
<feature type="modified residue" description="4-hydroxyproline; partial" evidence="1">
    <location>
        <position position="24"/>
    </location>
</feature>
<feature type="modified residue" description="4-hydroxyproline; partial" evidence="1">
    <location>
        <position position="43"/>
    </location>
</feature>
<feature type="modified residue" description="Histidine amide" evidence="1">
    <location>
        <position position="83"/>
    </location>
</feature>
<name>CX21A_CONPU</name>
<evidence type="ECO:0000269" key="1">
    <source>
    </source>
</evidence>
<evidence type="ECO:0000303" key="2">
    <source>
    </source>
</evidence>
<evidence type="ECO:0000305" key="3"/>
<keyword id="KW-0027">Amidation</keyword>
<keyword id="KW-0903">Direct protein sequencing</keyword>
<keyword id="KW-1015">Disulfide bond</keyword>
<keyword id="KW-0379">Hydroxylation</keyword>
<keyword id="KW-0964">Secreted</keyword>
<keyword id="KW-0800">Toxin</keyword>
<proteinExistence type="evidence at protein level"/>
<dbReference type="SMR" id="P86500"/>
<dbReference type="GO" id="GO:0005576">
    <property type="term" value="C:extracellular region"/>
    <property type="evidence" value="ECO:0007669"/>
    <property type="project" value="UniProtKB-SubCell"/>
</dbReference>
<dbReference type="GO" id="GO:0090729">
    <property type="term" value="F:toxin activity"/>
    <property type="evidence" value="ECO:0007669"/>
    <property type="project" value="UniProtKB-KW"/>
</dbReference>
<dbReference type="Gene3D" id="1.20.120.1800">
    <property type="match status" value="1"/>
</dbReference>
<sequence length="83" mass="9299">FELLPSQDRSCCIQKTLECLENYPGQASQRAHYCQQDATTNCPDTYYFGCCPGYATCMSINAGNNVRSAFDKCINRLCFDPGH</sequence>
<comment type="subunit">
    <text evidence="1">May form a non-covalent dimer.</text>
</comment>
<comment type="subcellular location">
    <subcellularLocation>
        <location evidence="1">Secreted</location>
    </subcellularLocation>
</comment>
<comment type="tissue specificity">
    <text evidence="1">Expressed by the venom duct.</text>
</comment>
<comment type="domain">
    <text evidence="3">The cysteine framework is XXI (CC-C-C-C-CC-C-C-C).</text>
</comment>
<comment type="PTM">
    <text evidence="3">Contains 5 disulfide bonds.</text>
</comment>
<comment type="mass spectrometry" mass="9320.0" method="MALDI" evidence="1">
    <text>Average mass.</text>
</comment>
<reference key="1">
    <citation type="journal article" date="2011" name="Biopolymers">
        <title>9.3 kDa Components of the injected venom of Conus purpurascens define a new 5-disulfide conotoxin framework.</title>
        <authorList>
            <person name="Moller C."/>
            <person name="Mari F."/>
        </authorList>
    </citation>
    <scope>PROTEIN SEQUENCE</scope>
    <scope>SUBCELLULAR LOCATION</scope>
    <scope>TISSUE SPECIFICITY</scope>
    <scope>SUBUNIT</scope>
    <scope>MASS SPECTROMETRY</scope>
    <scope>DISULFIDE BONDS</scope>
    <scope>HYDROXYLATION AT PRO-24 AND PRO-43</scope>
    <scope>AMIDATION AT HIS-83</scope>
    <source>
        <tissue>Venom</tissue>
    </source>
</reference>